<organism>
    <name type="scientific">Homo sapiens</name>
    <name type="common">Human</name>
    <dbReference type="NCBI Taxonomy" id="9606"/>
    <lineage>
        <taxon>Eukaryota</taxon>
        <taxon>Metazoa</taxon>
        <taxon>Chordata</taxon>
        <taxon>Craniata</taxon>
        <taxon>Vertebrata</taxon>
        <taxon>Euteleostomi</taxon>
        <taxon>Mammalia</taxon>
        <taxon>Eutheria</taxon>
        <taxon>Euarchontoglires</taxon>
        <taxon>Primates</taxon>
        <taxon>Haplorrhini</taxon>
        <taxon>Catarrhini</taxon>
        <taxon>Hominidae</taxon>
        <taxon>Homo</taxon>
    </lineage>
</organism>
<proteinExistence type="evidence at protein level"/>
<comment type="function">
    <text evidence="1 6 9 10 12 13">Cytokine that binds to TNFRSF6/FAS, a receptor that transduces the apoptotic signal into cells (PubMed:26334989, PubMed:9228058). Involved in cytotoxic T-cell-mediated apoptosis, natural killer cell-mediated apoptosis and in T-cell development (PubMed:7528780, PubMed:9228058, PubMed:9427603). Initiates fratricidal/suicidal activation-induced cell death (AICD) in antigen-activated T-cells contributing to the termination of immune responses (By similarity). TNFRSF6/FAS-mediated apoptosis also has a role in the induction of peripheral tolerance (By similarity). Binds to TNFRSF6B/DcR3, a decoy receptor that blocks apoptosis (PubMed:27806260).</text>
</comment>
<comment type="function">
    <molecule>Tumor necrosis factor ligand superfamily member 6, soluble form</molecule>
    <text evidence="1 9">Induces FAS-mediated activation of NF-kappa-B, initiating non-apoptotic signaling pathways (By similarity). Can induce apoptosis but does not appear to be essential for this process (PubMed:27806260).</text>
</comment>
<comment type="function">
    <molecule>FasL intracellular domain</molecule>
    <text evidence="6">Cytoplasmic form induces gene transcription inhibition.</text>
</comment>
<comment type="subunit">
    <text evidence="5 7 9 15">Homotrimer (PubMed:27806260). Interacts with ARHGAP9, BAIAP2L1, BTK, CACNB3, CACNB4, CRK, DLG2, DNMBP, DOCK4, EPS8L3, FGR, FYB1, FYN, HCK, ITK, ITSN2, KALRN, LYN, MACC1, MIA, MPP4, MYO15A, NCF1, NCK1, NCK2, NCKIPSD, OSTF1, PIK3R1, PSTPIP1, RIMBP3C, SAMSN1, SH3GL3, SH3PXD2B, SH3PXD2A, SH3RF2, SKAP2, SNX33, SNX9, SORBS3, SPTA1, SRC, SRGAP1, SRGAP2, SRGAP3, TEC, TJP3 and YES1.</text>
</comment>
<comment type="interaction">
    <interactant intactId="EBI-495538">
        <id>P48023</id>
    </interactant>
    <interactant intactId="EBI-78060">
        <id>Q14790</id>
        <label>CASP8</label>
    </interactant>
    <organismsDiffer>false</organismsDiffer>
    <experiments>5</experiments>
</comment>
<comment type="interaction">
    <interactant intactId="EBI-495538">
        <id>P48023</id>
    </interactant>
    <interactant intactId="EBI-3867333">
        <id>A8MQ03</id>
        <label>CYSRT1</label>
    </interactant>
    <organismsDiffer>false</organismsDiffer>
    <experiments>3</experiments>
</comment>
<comment type="interaction">
    <interactant intactId="EBI-495538">
        <id>P48023</id>
    </interactant>
    <interactant intactId="EBI-947964">
        <id>Q16610</id>
        <label>ECM1</label>
    </interactant>
    <organismsDiffer>false</organismsDiffer>
    <experiments>3</experiments>
</comment>
<comment type="interaction">
    <interactant intactId="EBI-495538">
        <id>P48023</id>
    </interactant>
    <interactant intactId="EBI-494804">
        <id>Q13158</id>
        <label>FADD</label>
    </interactant>
    <organismsDiffer>false</organismsDiffer>
    <experiments>4</experiments>
</comment>
<comment type="interaction">
    <interactant intactId="EBI-495538">
        <id>P48023</id>
    </interactant>
    <interactant intactId="EBI-494743">
        <id>P25445</id>
        <label>FAS</label>
    </interactant>
    <organismsDiffer>false</organismsDiffer>
    <experiments>4</experiments>
</comment>
<comment type="interaction">
    <interactant intactId="EBI-495538">
        <id>P48023</id>
    </interactant>
    <interactant intactId="EBI-1111248">
        <id>Q96RU3</id>
        <label>FNBP1</label>
    </interactant>
    <organismsDiffer>false</organismsDiffer>
    <experiments>4</experiments>
</comment>
<comment type="interaction">
    <interactant intactId="EBI-495538">
        <id>P48023</id>
    </interactant>
    <interactant intactId="EBI-515315">
        <id>P06241</id>
        <label>FYN</label>
    </interactant>
    <organismsDiffer>false</organismsDiffer>
    <experiments>2</experiments>
</comment>
<comment type="interaction">
    <interactant intactId="EBI-495538">
        <id>P48023</id>
    </interactant>
    <interactant intactId="EBI-8638439">
        <id>Q8IYA8</id>
        <label>IHO1</label>
    </interactant>
    <organismsDiffer>false</organismsDiffer>
    <experiments>3</experiments>
</comment>
<comment type="interaction">
    <interactant intactId="EBI-495538">
        <id>P48023</id>
    </interactant>
    <interactant intactId="EBI-968552">
        <id>Q08881</id>
        <label>ITK</label>
    </interactant>
    <organismsDiffer>false</organismsDiffer>
    <experiments>3</experiments>
</comment>
<comment type="interaction">
    <interactant intactId="EBI-495538">
        <id>P48023</id>
    </interactant>
    <interactant intactId="EBI-1049638">
        <id>Q14525</id>
        <label>KRT33B</label>
    </interactant>
    <organismsDiffer>false</organismsDiffer>
    <experiments>3</experiments>
</comment>
<comment type="interaction">
    <interactant intactId="EBI-495538">
        <id>P48023</id>
    </interactant>
    <interactant intactId="EBI-10171697">
        <id>Q6A162</id>
        <label>KRT40</label>
    </interactant>
    <organismsDiffer>false</organismsDiffer>
    <experiments>3</experiments>
</comment>
<comment type="interaction">
    <interactant intactId="EBI-495538">
        <id>P48023</id>
    </interactant>
    <interactant intactId="EBI-1052037">
        <id>Q8IUC1</id>
        <label>KRTAP11-1</label>
    </interactant>
    <organismsDiffer>false</organismsDiffer>
    <experiments>3</experiments>
</comment>
<comment type="interaction">
    <interactant intactId="EBI-495538">
        <id>P48023</id>
    </interactant>
    <interactant intactId="EBI-11953334">
        <id>P60328</id>
        <label>KRTAP12-3</label>
    </interactant>
    <organismsDiffer>false</organismsDiffer>
    <experiments>3</experiments>
</comment>
<comment type="interaction">
    <interactant intactId="EBI-495538">
        <id>P48023</id>
    </interactant>
    <interactant intactId="EBI-16429340">
        <id>A0A0S2Z4D7</id>
        <label>NCK1</label>
    </interactant>
    <organismsDiffer>false</organismsDiffer>
    <experiments>3</experiments>
</comment>
<comment type="interaction">
    <interactant intactId="EBI-495538">
        <id>P48023</id>
    </interactant>
    <interactant intactId="EBI-15578122">
        <id>P16333-1</id>
        <label>NCK1</label>
    </interactant>
    <organismsDiffer>false</organismsDiffer>
    <experiments>4</experiments>
</comment>
<comment type="interaction">
    <interactant intactId="EBI-495538">
        <id>P48023</id>
    </interactant>
    <interactant intactId="EBI-713635">
        <id>O43639</id>
        <label>NCK2</label>
    </interactant>
    <organismsDiffer>false</organismsDiffer>
    <experiments>4</experiments>
</comment>
<comment type="interaction">
    <interactant intactId="EBI-495538">
        <id>P48023</id>
    </interactant>
    <interactant intactId="EBI-945833">
        <id>Q7Z3S9</id>
        <label>NOTCH2NLA</label>
    </interactant>
    <organismsDiffer>false</organismsDiffer>
    <experiments>3</experiments>
</comment>
<comment type="interaction">
    <interactant intactId="EBI-495538">
        <id>P48023</id>
    </interactant>
    <interactant intactId="EBI-721769">
        <id>Q9BY11</id>
        <label>PACSIN1</label>
    </interactant>
    <organismsDiffer>false</organismsDiffer>
    <experiments>4</experiments>
</comment>
<comment type="interaction">
    <interactant intactId="EBI-495538">
        <id>P48023</id>
    </interactant>
    <interactant intactId="EBI-742503">
        <id>Q9UNF0</id>
        <label>PACSIN2</label>
    </interactant>
    <organismsDiffer>false</organismsDiffer>
    <experiments>4</experiments>
</comment>
<comment type="interaction">
    <interactant intactId="EBI-495538">
        <id>P48023</id>
    </interactant>
    <interactant intactId="EBI-77926">
        <id>Q9UKS6</id>
        <label>PACSIN3</label>
    </interactant>
    <organismsDiffer>false</organismsDiffer>
    <experiments>4</experiments>
</comment>
<comment type="interaction">
    <interactant intactId="EBI-495538">
        <id>P48023</id>
    </interactant>
    <interactant intactId="EBI-79464">
        <id>P27986</id>
        <label>PIK3R1</label>
    </interactant>
    <organismsDiffer>false</organismsDiffer>
    <experiments>2</experiments>
</comment>
<comment type="interaction">
    <interactant intactId="EBI-495538">
        <id>P48023</id>
    </interactant>
    <interactant intactId="EBI-1050964">
        <id>O43586</id>
        <label>PSTPIP1</label>
    </interactant>
    <organismsDiffer>false</organismsDiffer>
    <experiments>5</experiments>
</comment>
<comment type="interaction">
    <interactant intactId="EBI-495538">
        <id>P48023</id>
    </interactant>
    <interactant intactId="EBI-1052678">
        <id>O76081</id>
        <label>RGS20</label>
    </interactant>
    <organismsDiffer>false</organismsDiffer>
    <experiments>3</experiments>
</comment>
<comment type="interaction">
    <interactant intactId="EBI-495538">
        <id>P48023</id>
    </interactant>
    <interactant intactId="EBI-10178530">
        <id>O76081-6</id>
        <label>RGS20</label>
    </interactant>
    <organismsDiffer>false</organismsDiffer>
    <experiments>6</experiments>
</comment>
<comment type="interaction">
    <interactant intactId="EBI-495538">
        <id>P48023</id>
    </interactant>
    <interactant intactId="EBI-81088">
        <id>Q15436</id>
        <label>SEC23A</label>
    </interactant>
    <organismsDiffer>false</organismsDiffer>
    <experiments>3</experiments>
</comment>
<comment type="interaction">
    <interactant intactId="EBI-495538">
        <id>P48023</id>
    </interactant>
    <interactant intactId="EBI-2481535">
        <id>Q8WV41</id>
        <label>SNX33</label>
    </interactant>
    <organismsDiffer>false</organismsDiffer>
    <experiments>5</experiments>
</comment>
<comment type="interaction">
    <interactant intactId="EBI-495538">
        <id>P48023</id>
    </interactant>
    <interactant intactId="EBI-77848">
        <id>Q9Y5X1</id>
        <label>SNX9</label>
    </interactant>
    <organismsDiffer>false</organismsDiffer>
    <experiments>2</experiments>
</comment>
<comment type="interaction">
    <interactant intactId="EBI-495538">
        <id>P48023</id>
    </interactant>
    <interactant intactId="EBI-1051034">
        <id>O75044</id>
        <label>SRGAP2</label>
    </interactant>
    <organismsDiffer>false</organismsDiffer>
    <experiments>2</experiments>
</comment>
<comment type="interaction">
    <interactant intactId="EBI-495538">
        <id>P48023</id>
    </interactant>
    <interactant intactId="EBI-949753">
        <id>Q63HR2</id>
        <label>TNS2</label>
    </interactant>
    <organismsDiffer>false</organismsDiffer>
    <experiments>3</experiments>
</comment>
<comment type="interaction">
    <interactant intactId="EBI-495538">
        <id>P48023</id>
    </interactant>
    <interactant intactId="EBI-739936">
        <id>Q15642</id>
        <label>TRIP10</label>
    </interactant>
    <organismsDiffer>false</organismsDiffer>
    <experiments>4</experiments>
</comment>
<comment type="interaction">
    <interactant intactId="EBI-495538">
        <id>P48023</id>
    </interactant>
    <interactant intactId="EBI-742327">
        <id>Q15654</id>
        <label>TRIP6</label>
    </interactant>
    <organismsDiffer>false</organismsDiffer>
    <experiments>3</experiments>
</comment>
<comment type="interaction">
    <interactant intactId="EBI-495538">
        <id>P48023</id>
    </interactant>
    <interactant intactId="EBI-775229">
        <id>Q9DBG3</id>
        <label>Ap2b1</label>
    </interactant>
    <organismsDiffer>true</organismsDiffer>
    <experiments>2</experiments>
</comment>
<comment type="interaction">
    <interactant intactId="EBI-495538">
        <id>P48023</id>
    </interactant>
    <interactant intactId="EBI-6879954">
        <id>Q91ZR2</id>
        <label>Snx18</label>
    </interactant>
    <organismsDiffer>true</organismsDiffer>
    <experiments>4</experiments>
</comment>
<comment type="subcellular location">
    <subcellularLocation>
        <location evidence="6 13">Cell membrane</location>
        <topology evidence="2">Single-pass type II membrane protein</topology>
    </subcellularLocation>
    <subcellularLocation>
        <location evidence="5">Cytoplasmic vesicle lumen</location>
    </subcellularLocation>
    <subcellularLocation>
        <location evidence="5">Lysosome lumen</location>
    </subcellularLocation>
    <text evidence="5 6">Is internalized into multivesicular bodies of secretory lysosomes after phosphorylation by FGR and monoubiquitination (PubMed:17164290). Colocalizes with the SPPL2A protease at the cell membrane (PubMed:17557115).</text>
</comment>
<comment type="subcellular location">
    <molecule>Tumor necrosis factor ligand superfamily member 6, soluble form</molecule>
    <subcellularLocation>
        <location evidence="13">Secreted</location>
    </subcellularLocation>
    <text evidence="13">May be released into the extracellular fluid by cleavage from the cell surface.</text>
</comment>
<comment type="subcellular location">
    <molecule>FasL intracellular domain</molecule>
    <subcellularLocation>
        <location evidence="6">Nucleus</location>
    </subcellularLocation>
    <text evidence="6">The FasL ICD cytoplasmic form is translocated into the nucleus.</text>
</comment>
<comment type="alternative products">
    <event type="alternative splicing"/>
    <isoform>
        <id>P48023-1</id>
        <name>1</name>
        <sequence type="displayed"/>
    </isoform>
    <isoform>
        <id>P48023-2</id>
        <name>2</name>
        <sequence type="described" ref="VSP_006443 VSP_006444"/>
    </isoform>
</comment>
<comment type="PTM">
    <text evidence="6 13">The soluble form derives from the membrane form by proteolytic processing. The membrane-bound form undergoes two successive intramembrane proteolytic cleavages. The first one is processed by ADAM10 producing an N-terminal fragment, which lacks the receptor-binding extracellular domain. This ADAM10-processed FasL (FasL APL) remnant form is still membrane anchored and further processed by SPPL2A that liberates the FasL intracellular domain (FasL ICD). FasL shedding by ADAM10 is a prerequisite for subsequent intramembrane cleavage by SPPL2A in T-cells.</text>
</comment>
<comment type="PTM">
    <text evidence="9 12">N-glycosylated (PubMed:9228058). Glycosylation enhances apoptotic activity (PubMed:27806260).</text>
</comment>
<comment type="PTM">
    <text evidence="5">Phosphorylated by FGR on tyrosine residues; this is required for ubiquitination and subsequent internalization.</text>
</comment>
<comment type="PTM">
    <text evidence="5">Monoubiquitinated.</text>
</comment>
<comment type="disease" evidence="8 11">
    <disease id="DI-00156">
        <name>Autoimmune lymphoproliferative syndrome 1B</name>
        <acronym>ALPS1B</acronym>
        <description>A disorder of apoptosis that manifests in early childhood and results in the accumulation of autoreactive lymphocytes. It is characterized by non-malignant lymphadenopathy with hepatosplenomegaly, and autoimmune hemolytic anemia, thrombocytopenia and neutropenia.</description>
        <dbReference type="MIM" id="601859"/>
    </disease>
    <text>The disease is caused by variants affecting the gene represented in this entry.</text>
</comment>
<comment type="similarity">
    <text evidence="15">Belongs to the tumor necrosis factor family.</text>
</comment>
<comment type="online information" name="FASLGbase">
    <link uri="https://databases.lovd.nl/shared/genes/FASLG"/>
    <text>FASLG mutation db</text>
</comment>
<comment type="online information" name="Wikipedia">
    <link uri="https://en.wikipedia.org/wiki/FAS_ligand"/>
    <text>FAS-ligand entry</text>
</comment>
<keyword id="KW-0002">3D-structure</keyword>
<keyword id="KW-0025">Alternative splicing</keyword>
<keyword id="KW-0053">Apoptosis</keyword>
<keyword id="KW-1003">Cell membrane</keyword>
<keyword id="KW-0202">Cytokine</keyword>
<keyword id="KW-0968">Cytoplasmic vesicle</keyword>
<keyword id="KW-1015">Disulfide bond</keyword>
<keyword id="KW-0325">Glycoprotein</keyword>
<keyword id="KW-0458">Lysosome</keyword>
<keyword id="KW-0472">Membrane</keyword>
<keyword id="KW-0539">Nucleus</keyword>
<keyword id="KW-1267">Proteomics identification</keyword>
<keyword id="KW-1185">Reference proteome</keyword>
<keyword id="KW-0678">Repressor</keyword>
<keyword id="KW-0964">Secreted</keyword>
<keyword id="KW-0735">Signal-anchor</keyword>
<keyword id="KW-0804">Transcription</keyword>
<keyword id="KW-0805">Transcription regulation</keyword>
<keyword id="KW-0812">Transmembrane</keyword>
<keyword id="KW-1133">Transmembrane helix</keyword>
<keyword id="KW-0832">Ubl conjugation</keyword>
<name>TNFL6_HUMAN</name>
<accession>P48023</accession>
<accession>Q9BZP9</accession>
<gene>
    <name type="primary">FASLG</name>
    <name type="synonym">APT1LG1</name>
    <name type="synonym">CD95L</name>
    <name type="synonym">FASL</name>
    <name type="synonym">TNFSF6</name>
</gene>
<reference key="1">
    <citation type="journal article" date="1995" name="J. Exp. Med.">
        <title>Fas ligand mediates activation-induced cell death in human T lymphocytes.</title>
        <authorList>
            <person name="Alderson M."/>
        </authorList>
    </citation>
    <scope>NUCLEOTIDE SEQUENCE [MRNA] (ISOFORM 1)</scope>
    <scope>FUNCTION</scope>
</reference>
<reference key="2">
    <citation type="journal article" date="1994" name="Int. Immunol.">
        <title>Human Fas ligand: gene structure, chromosomal location and species specificity.</title>
        <authorList>
            <person name="Takahashi T."/>
            <person name="Tanaka M."/>
            <person name="Inazawa J."/>
            <person name="Abe T."/>
            <person name="Suda T."/>
            <person name="Nagata S."/>
        </authorList>
    </citation>
    <scope>NUCLEOTIDE SEQUENCE [MRNA] (ISOFORM 1)</scope>
</reference>
<reference key="3">
    <citation type="submission" date="1995-06" db="EMBL/GenBank/DDBJ databases">
        <authorList>
            <person name="Schaetzlein C.E."/>
            <person name="Poehlmann R."/>
            <person name="Philippsen P."/>
            <person name="Eibel H."/>
        </authorList>
    </citation>
    <scope>NUCLEOTIDE SEQUENCE [MRNA] (ISOFORM 1)</scope>
</reference>
<reference key="4">
    <citation type="journal article" date="1994" name="Biochem. Biophys. Res. Commun.">
        <title>Role of Fas ligand in apoptosis induced by hepatitis C virus infection.</title>
        <authorList>
            <person name="Mita E."/>
            <person name="Hayashi N."/>
            <person name="Iio S."/>
            <person name="Takehara T."/>
            <person name="Hijioka T."/>
            <person name="Kasahara A."/>
            <person name="Fusamoto H."/>
            <person name="Kamada T."/>
        </authorList>
    </citation>
    <scope>NUCLEOTIDE SEQUENCE [MRNA] (ISOFORM 1)</scope>
</reference>
<reference key="5">
    <citation type="submission" date="2000-07" db="EMBL/GenBank/DDBJ databases">
        <title>Isolation and characterization of a new naturally occurring variant of human Fas ligand that is expressed only in membrane bound form.</title>
        <authorList>
            <person name="Zeytun A."/>
            <person name="Nagarkatti M."/>
            <person name="Nagarkatti P.S."/>
        </authorList>
    </citation>
    <scope>NUCLEOTIDE SEQUENCE [MRNA] (ISOFORM 2)</scope>
    <source>
        <tissue>Leukocyte</tissue>
    </source>
</reference>
<reference key="6">
    <citation type="journal article" date="2006" name="Nature">
        <title>The DNA sequence and biological annotation of human chromosome 1.</title>
        <authorList>
            <person name="Gregory S.G."/>
            <person name="Barlow K.F."/>
            <person name="McLay K.E."/>
            <person name="Kaul R."/>
            <person name="Swarbreck D."/>
            <person name="Dunham A."/>
            <person name="Scott C.E."/>
            <person name="Howe K.L."/>
            <person name="Woodfine K."/>
            <person name="Spencer C.C.A."/>
            <person name="Jones M.C."/>
            <person name="Gillson C."/>
            <person name="Searle S."/>
            <person name="Zhou Y."/>
            <person name="Kokocinski F."/>
            <person name="McDonald L."/>
            <person name="Evans R."/>
            <person name="Phillips K."/>
            <person name="Atkinson A."/>
            <person name="Cooper R."/>
            <person name="Jones C."/>
            <person name="Hall R.E."/>
            <person name="Andrews T.D."/>
            <person name="Lloyd C."/>
            <person name="Ainscough R."/>
            <person name="Almeida J.P."/>
            <person name="Ambrose K.D."/>
            <person name="Anderson F."/>
            <person name="Andrew R.W."/>
            <person name="Ashwell R.I.S."/>
            <person name="Aubin K."/>
            <person name="Babbage A.K."/>
            <person name="Bagguley C.L."/>
            <person name="Bailey J."/>
            <person name="Beasley H."/>
            <person name="Bethel G."/>
            <person name="Bird C.P."/>
            <person name="Bray-Allen S."/>
            <person name="Brown J.Y."/>
            <person name="Brown A.J."/>
            <person name="Buckley D."/>
            <person name="Burton J."/>
            <person name="Bye J."/>
            <person name="Carder C."/>
            <person name="Chapman J.C."/>
            <person name="Clark S.Y."/>
            <person name="Clarke G."/>
            <person name="Clee C."/>
            <person name="Cobley V."/>
            <person name="Collier R.E."/>
            <person name="Corby N."/>
            <person name="Coville G.J."/>
            <person name="Davies J."/>
            <person name="Deadman R."/>
            <person name="Dunn M."/>
            <person name="Earthrowl M."/>
            <person name="Ellington A.G."/>
            <person name="Errington H."/>
            <person name="Frankish A."/>
            <person name="Frankland J."/>
            <person name="French L."/>
            <person name="Garner P."/>
            <person name="Garnett J."/>
            <person name="Gay L."/>
            <person name="Ghori M.R.J."/>
            <person name="Gibson R."/>
            <person name="Gilby L.M."/>
            <person name="Gillett W."/>
            <person name="Glithero R.J."/>
            <person name="Grafham D.V."/>
            <person name="Griffiths C."/>
            <person name="Griffiths-Jones S."/>
            <person name="Grocock R."/>
            <person name="Hammond S."/>
            <person name="Harrison E.S.I."/>
            <person name="Hart E."/>
            <person name="Haugen E."/>
            <person name="Heath P.D."/>
            <person name="Holmes S."/>
            <person name="Holt K."/>
            <person name="Howden P.J."/>
            <person name="Hunt A.R."/>
            <person name="Hunt S.E."/>
            <person name="Hunter G."/>
            <person name="Isherwood J."/>
            <person name="James R."/>
            <person name="Johnson C."/>
            <person name="Johnson D."/>
            <person name="Joy A."/>
            <person name="Kay M."/>
            <person name="Kershaw J.K."/>
            <person name="Kibukawa M."/>
            <person name="Kimberley A.M."/>
            <person name="King A."/>
            <person name="Knights A.J."/>
            <person name="Lad H."/>
            <person name="Laird G."/>
            <person name="Lawlor S."/>
            <person name="Leongamornlert D.A."/>
            <person name="Lloyd D.M."/>
            <person name="Loveland J."/>
            <person name="Lovell J."/>
            <person name="Lush M.J."/>
            <person name="Lyne R."/>
            <person name="Martin S."/>
            <person name="Mashreghi-Mohammadi M."/>
            <person name="Matthews L."/>
            <person name="Matthews N.S.W."/>
            <person name="McLaren S."/>
            <person name="Milne S."/>
            <person name="Mistry S."/>
            <person name="Moore M.J.F."/>
            <person name="Nickerson T."/>
            <person name="O'Dell C.N."/>
            <person name="Oliver K."/>
            <person name="Palmeiri A."/>
            <person name="Palmer S.A."/>
            <person name="Parker A."/>
            <person name="Patel D."/>
            <person name="Pearce A.V."/>
            <person name="Peck A.I."/>
            <person name="Pelan S."/>
            <person name="Phelps K."/>
            <person name="Phillimore B.J."/>
            <person name="Plumb R."/>
            <person name="Rajan J."/>
            <person name="Raymond C."/>
            <person name="Rouse G."/>
            <person name="Saenphimmachak C."/>
            <person name="Sehra H.K."/>
            <person name="Sheridan E."/>
            <person name="Shownkeen R."/>
            <person name="Sims S."/>
            <person name="Skuce C.D."/>
            <person name="Smith M."/>
            <person name="Steward C."/>
            <person name="Subramanian S."/>
            <person name="Sycamore N."/>
            <person name="Tracey A."/>
            <person name="Tromans A."/>
            <person name="Van Helmond Z."/>
            <person name="Wall M."/>
            <person name="Wallis J.M."/>
            <person name="White S."/>
            <person name="Whitehead S.L."/>
            <person name="Wilkinson J.E."/>
            <person name="Willey D.L."/>
            <person name="Williams H."/>
            <person name="Wilming L."/>
            <person name="Wray P.W."/>
            <person name="Wu Z."/>
            <person name="Coulson A."/>
            <person name="Vaudin M."/>
            <person name="Sulston J.E."/>
            <person name="Durbin R.M."/>
            <person name="Hubbard T."/>
            <person name="Wooster R."/>
            <person name="Dunham I."/>
            <person name="Carter N.P."/>
            <person name="McVean G."/>
            <person name="Ross M.T."/>
            <person name="Harrow J."/>
            <person name="Olson M.V."/>
            <person name="Beck S."/>
            <person name="Rogers J."/>
            <person name="Bentley D.R."/>
        </authorList>
    </citation>
    <scope>NUCLEOTIDE SEQUENCE [LARGE SCALE GENOMIC DNA]</scope>
</reference>
<reference key="7">
    <citation type="journal article" date="2004" name="Genome Res.">
        <title>The status, quality, and expansion of the NIH full-length cDNA project: the Mammalian Gene Collection (MGC).</title>
        <authorList>
            <consortium name="The MGC Project Team"/>
        </authorList>
    </citation>
    <scope>NUCLEOTIDE SEQUENCE [LARGE SCALE MRNA] (ISOFORM 1)</scope>
    <source>
        <tissue>Blood</tissue>
    </source>
</reference>
<reference key="8">
    <citation type="submission" date="1998-04" db="EMBL/GenBank/DDBJ databases">
        <authorList>
            <person name="Matsumura M."/>
            <person name="Nakanishi Y."/>
            <person name="Ohba Y."/>
        </authorList>
    </citation>
    <scope>NUCLEOTIDE SEQUENCE [GENOMIC DNA] OF 1-10</scope>
    <source>
        <tissue>Blood</tissue>
    </source>
</reference>
<reference key="9">
    <citation type="journal article" date="1996" name="J. Clin. Invest.">
        <title>Fas ligand mutation in a patient with systemic lupus erythematosus and lymphoproliferative disease.</title>
        <authorList>
            <person name="Wu J."/>
            <person name="Wilson J."/>
            <person name="He J."/>
            <person name="Xiang L."/>
            <person name="Schur P.H."/>
            <person name="Mountz J.D."/>
        </authorList>
    </citation>
    <scope>INVOLVEMENT IN ALPS1B</scope>
</reference>
<reference key="10">
    <citation type="journal article" date="1997" name="J. Biol. Chem.">
        <title>Characterization of Fas (Apo-1, CD95)-Fas ligand interaction.</title>
        <authorList>
            <person name="Schneider P."/>
            <person name="Bodmer J.-L."/>
            <person name="Holler N."/>
            <person name="Mattmann C."/>
            <person name="Scuderi P."/>
            <person name="Terskikh A."/>
            <person name="Peitsch M.C."/>
            <person name="Tschopp J."/>
        </authorList>
    </citation>
    <scope>CHARACTERIZATION</scope>
    <scope>MUTAGENESIS OF PRO-206; TYR-218 AND PHE-275</scope>
</reference>
<reference key="11">
    <citation type="journal article" date="1998" name="Nat. Med.">
        <title>Downregulation of Fas ligand by shedding.</title>
        <authorList>
            <person name="Tanaka M."/>
            <person name="Itai T."/>
            <person name="Adachi M."/>
            <person name="Nagata S."/>
        </authorList>
    </citation>
    <scope>PROTEOLYTIC PROCESSING</scope>
    <scope>FUNCTION</scope>
    <scope>SUBCELLULAR LOCATION</scope>
</reference>
<reference key="12">
    <citation type="journal article" date="2007" name="Cell Death Differ.">
        <title>The Fas ligand intracellular domain is released by ADAM10 and SPPL2a cleavage in T-cells.</title>
        <authorList>
            <person name="Kirkin V."/>
            <person name="Cahuzac N."/>
            <person name="Guardiola-Serrano F."/>
            <person name="Huault S."/>
            <person name="Luckerath K."/>
            <person name="Friedmann E."/>
            <person name="Novac N."/>
            <person name="Wels W.S."/>
            <person name="Martoglio B."/>
            <person name="Hueber A.O."/>
            <person name="Zornig M."/>
        </authorList>
    </citation>
    <scope>FUNCTION OF FASL INTRACELLULAR DOMAIN</scope>
    <scope>CLEAVAGE BY ADAM10 AND SPPL2A</scope>
    <scope>SUBCELLULAR LOCATION</scope>
</reference>
<reference key="13">
    <citation type="journal article" date="2007" name="J. Cell Sci.">
        <title>Sorting of Fas ligand to secretory lysosomes is regulated by mono-ubiquitylation and phosphorylation.</title>
        <authorList>
            <person name="Zuccato E."/>
            <person name="Blott E.J."/>
            <person name="Holt O."/>
            <person name="Sigismund S."/>
            <person name="Shaw M."/>
            <person name="Bossi G."/>
            <person name="Griffiths G.M."/>
        </authorList>
    </citation>
    <scope>UBIQUITINATION</scope>
    <scope>PHOSPHORYLATION</scope>
    <scope>INTERACTION WITH FGR; FYN AND LYN</scope>
    <scope>SUBCELLULAR LOCATION</scope>
</reference>
<reference key="14">
    <citation type="journal article" date="2009" name="BMC Immunol.">
        <title>Identification of SH3 domain interaction partners of human FasL (CD178) by phage display screening.</title>
        <authorList>
            <person name="Voss M."/>
            <person name="Lettau M."/>
            <person name="Janssen O."/>
        </authorList>
    </citation>
    <scope>INTERACTION WITH ARHGAP9; BAIAP2L1; BTK; CACNB3; CACNB4; CRK; DLG2; DNMBP; DOCK4; EPS8L3; FYB1; FYN; HCK; ITK; ITSN2; KALRN; LYN; MACC1; MIA; MPP4; MYO15A; NCF1; NCK1; NCK2; NCKIPSD; OSTF1; PIK3R1; PSTPIP1; RIMBP3C; SAMSN1; SH3GL3; SH3PXD2B; SH3PXD2A; SH3RF2; SKAP2; SNX33; SNX9; SORBS3; SPTA1; SRC; SRGAP1; SRGAP2; SRGAP3; TEC; TJP3 AND YES1</scope>
</reference>
<reference key="15">
    <citation type="journal article" date="2016" name="Structure">
        <title>Crystal structure of the complex of human FasL and its decoy receptor DcR3.</title>
        <authorList>
            <person name="Liu W."/>
            <person name="Ramagopal U."/>
            <person name="Cheng H."/>
            <person name="Bonanno J.B."/>
            <person name="Toro R."/>
            <person name="Bhosle R."/>
            <person name="Zhan C."/>
            <person name="Almo S.C."/>
        </authorList>
    </citation>
    <scope>X-RAY CRYSTALLOGRAPHY (2.00 ANGSTROMS) OF 130-281 IN COMPLEX WITH TNFRSF6B</scope>
    <scope>FUNCTION</scope>
    <scope>SUBUNIT</scope>
    <scope>GLYCOSYLATION</scope>
    <scope>DISULFIDE BOND</scope>
</reference>
<reference key="16">
    <citation type="journal article" date="2015" name="Pediatr. Res.">
        <title>Decreased activation-induced cell death by EBV-transformed B-cells from a patient with autoimmune lymphoproliferative syndrome caused by a novel FASLG mutation.</title>
        <authorList>
            <person name="Ruiz-Garcia R."/>
            <person name="Mora S."/>
            <person name="Lozano-Sanchez G."/>
            <person name="Martinez-Lostao L."/>
            <person name="Paz-Artal E."/>
            <person name="Ruiz-Contreras J."/>
            <person name="Anel A."/>
            <person name="Gonzalez-Granado L.I."/>
            <person name="Moreno-Perez D."/>
            <person name="Allende L.M."/>
        </authorList>
    </citation>
    <scope>VARIANT ALPS1B SER-202</scope>
    <scope>CHARACTERIZATION OF VARIANT ALPS1B SER-202</scope>
</reference>
<evidence type="ECO:0000250" key="1">
    <source>
        <dbReference type="UniProtKB" id="P41047"/>
    </source>
</evidence>
<evidence type="ECO:0000255" key="2"/>
<evidence type="ECO:0000255" key="3">
    <source>
        <dbReference type="PROSITE-ProRule" id="PRU01387"/>
    </source>
</evidence>
<evidence type="ECO:0000256" key="4">
    <source>
        <dbReference type="SAM" id="MobiDB-lite"/>
    </source>
</evidence>
<evidence type="ECO:0000269" key="5">
    <source>
    </source>
</evidence>
<evidence type="ECO:0000269" key="6">
    <source>
    </source>
</evidence>
<evidence type="ECO:0000269" key="7">
    <source>
    </source>
</evidence>
<evidence type="ECO:0000269" key="8">
    <source>
    </source>
</evidence>
<evidence type="ECO:0000269" key="9">
    <source>
    </source>
</evidence>
<evidence type="ECO:0000269" key="10">
    <source>
    </source>
</evidence>
<evidence type="ECO:0000269" key="11">
    <source>
    </source>
</evidence>
<evidence type="ECO:0000269" key="12">
    <source>
    </source>
</evidence>
<evidence type="ECO:0000269" key="13">
    <source>
    </source>
</evidence>
<evidence type="ECO:0000303" key="14">
    <source ref="5"/>
</evidence>
<evidence type="ECO:0000305" key="15"/>
<evidence type="ECO:0007744" key="16">
    <source>
        <dbReference type="PDB" id="4MSV"/>
    </source>
</evidence>
<evidence type="ECO:0007744" key="17">
    <source>
        <dbReference type="PDB" id="5L19"/>
    </source>
</evidence>
<evidence type="ECO:0007829" key="18">
    <source>
        <dbReference type="PDB" id="4MSV"/>
    </source>
</evidence>
<evidence type="ECO:0007829" key="19">
    <source>
        <dbReference type="PDB" id="5L19"/>
    </source>
</evidence>
<protein>
    <recommendedName>
        <fullName>Tumor necrosis factor ligand superfamily member 6</fullName>
    </recommendedName>
    <alternativeName>
        <fullName>Apoptosis antigen ligand</fullName>
        <shortName>APTL</shortName>
    </alternativeName>
    <alternativeName>
        <fullName>CD95 ligand</fullName>
        <shortName>CD95-L</shortName>
    </alternativeName>
    <alternativeName>
        <fullName>Fas antigen ligand</fullName>
        <shortName>Fas ligand</shortName>
        <shortName>FasL</shortName>
    </alternativeName>
    <cdAntigenName>CD178</cdAntigenName>
    <component>
        <recommendedName>
            <fullName>Tumor necrosis factor ligand superfamily member 6, membrane form</fullName>
        </recommendedName>
    </component>
    <component>
        <recommendedName>
            <fullName>Tumor necrosis factor ligand superfamily member 6, soluble form</fullName>
        </recommendedName>
        <alternativeName>
            <fullName>Receptor-binding FasL ectodomain</fullName>
        </alternativeName>
        <alternativeName>
            <fullName>Soluble Fas ligand</fullName>
            <shortName>sFasL</shortName>
        </alternativeName>
    </component>
    <component>
        <recommendedName>
            <fullName>ADAM10-processed FasL form</fullName>
            <shortName>APL</shortName>
        </recommendedName>
    </component>
    <component>
        <recommendedName>
            <fullName>FasL intracellular domain</fullName>
            <shortName>FasL ICD</shortName>
        </recommendedName>
        <alternativeName>
            <fullName>SPPL2A-processed FasL form</fullName>
            <shortName>SPA</shortName>
        </alternativeName>
    </component>
</protein>
<dbReference type="EMBL" id="U08137">
    <property type="protein sequence ID" value="AAC50071.1"/>
    <property type="molecule type" value="mRNA"/>
</dbReference>
<dbReference type="EMBL" id="U11821">
    <property type="protein sequence ID" value="AAC50124.1"/>
    <property type="molecule type" value="mRNA"/>
</dbReference>
<dbReference type="EMBL" id="X89102">
    <property type="protein sequence ID" value="CAA61474.1"/>
    <property type="molecule type" value="mRNA"/>
</dbReference>
<dbReference type="EMBL" id="D38122">
    <property type="protein sequence ID" value="BAA07320.1"/>
    <property type="molecule type" value="mRNA"/>
</dbReference>
<dbReference type="EMBL" id="AF288573">
    <property type="protein sequence ID" value="AAG60017.1"/>
    <property type="molecule type" value="mRNA"/>
</dbReference>
<dbReference type="EMBL" id="Z96050">
    <property type="status" value="NOT_ANNOTATED_CDS"/>
    <property type="molecule type" value="Genomic_DNA"/>
</dbReference>
<dbReference type="EMBL" id="BC017502">
    <property type="protein sequence ID" value="AAH17502.1"/>
    <property type="molecule type" value="mRNA"/>
</dbReference>
<dbReference type="EMBL" id="AB013303">
    <property type="protein sequence ID" value="BAA32542.1"/>
    <property type="molecule type" value="Genomic_DNA"/>
</dbReference>
<dbReference type="CCDS" id="CCDS1304.1">
    <molecule id="P48023-1"/>
</dbReference>
<dbReference type="CCDS" id="CCDS76243.1">
    <molecule id="P48023-2"/>
</dbReference>
<dbReference type="PIR" id="I38707">
    <property type="entry name" value="I38707"/>
</dbReference>
<dbReference type="RefSeq" id="NP_000630.1">
    <molecule id="P48023-1"/>
    <property type="nucleotide sequence ID" value="NM_000639.3"/>
</dbReference>
<dbReference type="RefSeq" id="NP_001289675.1">
    <molecule id="P48023-2"/>
    <property type="nucleotide sequence ID" value="NM_001302746.2"/>
</dbReference>
<dbReference type="PDB" id="4MSV">
    <property type="method" value="X-ray"/>
    <property type="resolution" value="2.50 A"/>
    <property type="chains" value="A=130-281"/>
</dbReference>
<dbReference type="PDB" id="5L19">
    <property type="method" value="X-ray"/>
    <property type="resolution" value="2.00 A"/>
    <property type="chains" value="A=130-281"/>
</dbReference>
<dbReference type="PDB" id="5L36">
    <property type="method" value="X-ray"/>
    <property type="resolution" value="3.10 A"/>
    <property type="chains" value="A=130-281"/>
</dbReference>
<dbReference type="PDBsum" id="4MSV"/>
<dbReference type="PDBsum" id="5L19"/>
<dbReference type="PDBsum" id="5L36"/>
<dbReference type="SMR" id="P48023"/>
<dbReference type="BioGRID" id="106852">
    <property type="interactions" value="93"/>
</dbReference>
<dbReference type="DIP" id="DIP-2997N"/>
<dbReference type="ELM" id="P48023"/>
<dbReference type="FunCoup" id="P48023">
    <property type="interactions" value="1194"/>
</dbReference>
<dbReference type="IntAct" id="P48023">
    <property type="interactions" value="85"/>
</dbReference>
<dbReference type="MINT" id="P48023"/>
<dbReference type="STRING" id="9606.ENSP00000356694"/>
<dbReference type="BindingDB" id="P48023"/>
<dbReference type="ChEMBL" id="CHEMBL5714"/>
<dbReference type="TCDB" id="8.A.177.1.1">
    <property type="family name" value="the tumor necrosis factor ligand member 6 (tnfl6) family"/>
</dbReference>
<dbReference type="GlyCosmos" id="P48023">
    <property type="glycosylation" value="3 sites, No reported glycans"/>
</dbReference>
<dbReference type="GlyGen" id="P48023">
    <property type="glycosylation" value="5 sites, 1 O-linked glycan (1 site)"/>
</dbReference>
<dbReference type="iPTMnet" id="P48023"/>
<dbReference type="PhosphoSitePlus" id="P48023"/>
<dbReference type="SwissPalm" id="P48023"/>
<dbReference type="BioMuta" id="FASLG"/>
<dbReference type="DMDM" id="1345957"/>
<dbReference type="MassIVE" id="P48023"/>
<dbReference type="PaxDb" id="9606-ENSP00000356694"/>
<dbReference type="PeptideAtlas" id="P48023"/>
<dbReference type="ABCD" id="P48023">
    <property type="antibodies" value="4 sequenced antibodies"/>
</dbReference>
<dbReference type="Antibodypedia" id="4418">
    <property type="antibodies" value="1382 antibodies from 46 providers"/>
</dbReference>
<dbReference type="DNASU" id="356"/>
<dbReference type="Ensembl" id="ENST00000340030.4">
    <molecule id="P48023-2"/>
    <property type="protein sequence ID" value="ENSP00000344739.3"/>
    <property type="gene ID" value="ENSG00000117560.8"/>
</dbReference>
<dbReference type="Ensembl" id="ENST00000367721.3">
    <molecule id="P48023-1"/>
    <property type="protein sequence ID" value="ENSP00000356694.2"/>
    <property type="gene ID" value="ENSG00000117560.8"/>
</dbReference>
<dbReference type="GeneID" id="356"/>
<dbReference type="KEGG" id="hsa:356"/>
<dbReference type="MANE-Select" id="ENST00000367721.3">
    <property type="protein sequence ID" value="ENSP00000356694.2"/>
    <property type="RefSeq nucleotide sequence ID" value="NM_000639.3"/>
    <property type="RefSeq protein sequence ID" value="NP_000630.1"/>
</dbReference>
<dbReference type="UCSC" id="uc001git.4">
    <molecule id="P48023-1"/>
    <property type="organism name" value="human"/>
</dbReference>
<dbReference type="AGR" id="HGNC:11936"/>
<dbReference type="CTD" id="356"/>
<dbReference type="DisGeNET" id="356"/>
<dbReference type="GeneCards" id="FASLG"/>
<dbReference type="GeneReviews" id="FASLG"/>
<dbReference type="HGNC" id="HGNC:11936">
    <property type="gene designation" value="FASLG"/>
</dbReference>
<dbReference type="HPA" id="ENSG00000117560">
    <property type="expression patterns" value="Tissue enhanced (lymphoid)"/>
</dbReference>
<dbReference type="MalaCards" id="FASLG"/>
<dbReference type="MIM" id="134638">
    <property type="type" value="gene"/>
</dbReference>
<dbReference type="MIM" id="601859">
    <property type="type" value="phenotype"/>
</dbReference>
<dbReference type="neXtProt" id="NX_P48023"/>
<dbReference type="OpenTargets" id="ENSG00000117560"/>
<dbReference type="Orphanet" id="3261">
    <property type="disease" value="Autoimmune lymphoproliferative syndrome"/>
</dbReference>
<dbReference type="PharmGKB" id="PA56"/>
<dbReference type="VEuPathDB" id="HostDB:ENSG00000117560"/>
<dbReference type="eggNOG" id="ENOG502S09I">
    <property type="taxonomic scope" value="Eukaryota"/>
</dbReference>
<dbReference type="GeneTree" id="ENSGT01060000248544"/>
<dbReference type="HOGENOM" id="CLU_070352_2_0_1"/>
<dbReference type="InParanoid" id="P48023"/>
<dbReference type="OMA" id="KVKRSAH"/>
<dbReference type="OrthoDB" id="5983780at2759"/>
<dbReference type="PAN-GO" id="P48023">
    <property type="GO annotations" value="2 GO annotations based on evolutionary models"/>
</dbReference>
<dbReference type="PhylomeDB" id="P48023"/>
<dbReference type="TreeFam" id="TF332169"/>
<dbReference type="PathwayCommons" id="P48023"/>
<dbReference type="Reactome" id="R-HSA-140534">
    <property type="pathway name" value="Caspase activation via Death Receptors in the presence of ligand"/>
</dbReference>
<dbReference type="Reactome" id="R-HSA-3371378">
    <property type="pathway name" value="Regulation by c-FLIP"/>
</dbReference>
<dbReference type="Reactome" id="R-HSA-5213460">
    <property type="pathway name" value="RIPK1-mediated regulated necrosis"/>
</dbReference>
<dbReference type="Reactome" id="R-HSA-5218900">
    <property type="pathway name" value="CASP8 activity is inhibited"/>
</dbReference>
<dbReference type="Reactome" id="R-HSA-6785807">
    <property type="pathway name" value="Interleukin-4 and Interleukin-13 signaling"/>
</dbReference>
<dbReference type="Reactome" id="R-HSA-69416">
    <property type="pathway name" value="Dimerization of procaspase-8"/>
</dbReference>
<dbReference type="Reactome" id="R-HSA-75157">
    <property type="pathway name" value="FasL/ CD95L signaling"/>
</dbReference>
<dbReference type="Reactome" id="R-HSA-8862803">
    <property type="pathway name" value="Deregulated CDK5 triggers multiple neurodegenerative pathways in Alzheimer's disease models"/>
</dbReference>
<dbReference type="Reactome" id="R-HSA-9614657">
    <property type="pathway name" value="FOXO-mediated transcription of cell death genes"/>
</dbReference>
<dbReference type="SignaLink" id="P48023"/>
<dbReference type="SIGNOR" id="P48023"/>
<dbReference type="BioGRID-ORCS" id="356">
    <property type="hits" value="10 hits in 1151 CRISPR screens"/>
</dbReference>
<dbReference type="ChiTaRS" id="FASLG">
    <property type="organism name" value="human"/>
</dbReference>
<dbReference type="EvolutionaryTrace" id="P48023"/>
<dbReference type="GeneWiki" id="Fas_ligand"/>
<dbReference type="GenomeRNAi" id="356"/>
<dbReference type="Pharos" id="P48023">
    <property type="development level" value="Tbio"/>
</dbReference>
<dbReference type="PRO" id="PR:P48023"/>
<dbReference type="Proteomes" id="UP000005640">
    <property type="component" value="Chromosome 1"/>
</dbReference>
<dbReference type="RNAct" id="P48023">
    <property type="molecule type" value="protein"/>
</dbReference>
<dbReference type="Bgee" id="ENSG00000117560">
    <property type="expression patterns" value="Expressed in granulocyte and 89 other cell types or tissues"/>
</dbReference>
<dbReference type="ExpressionAtlas" id="P48023">
    <property type="expression patterns" value="baseline and differential"/>
</dbReference>
<dbReference type="GO" id="GO:0005901">
    <property type="term" value="C:caveola"/>
    <property type="evidence" value="ECO:0007669"/>
    <property type="project" value="Ensembl"/>
</dbReference>
<dbReference type="GO" id="GO:0060205">
    <property type="term" value="C:cytoplasmic vesicle lumen"/>
    <property type="evidence" value="ECO:0007669"/>
    <property type="project" value="UniProtKB-SubCell"/>
</dbReference>
<dbReference type="GO" id="GO:0009897">
    <property type="term" value="C:external side of plasma membrane"/>
    <property type="evidence" value="ECO:0007669"/>
    <property type="project" value="Ensembl"/>
</dbReference>
<dbReference type="GO" id="GO:0070062">
    <property type="term" value="C:extracellular exosome"/>
    <property type="evidence" value="ECO:0000314"/>
    <property type="project" value="UniProtKB"/>
</dbReference>
<dbReference type="GO" id="GO:0005576">
    <property type="term" value="C:extracellular region"/>
    <property type="evidence" value="ECO:0000304"/>
    <property type="project" value="Reactome"/>
</dbReference>
<dbReference type="GO" id="GO:0005615">
    <property type="term" value="C:extracellular space"/>
    <property type="evidence" value="ECO:0000314"/>
    <property type="project" value="BHF-UCL"/>
</dbReference>
<dbReference type="GO" id="GO:0043202">
    <property type="term" value="C:lysosomal lumen"/>
    <property type="evidence" value="ECO:0007669"/>
    <property type="project" value="UniProtKB-SubCell"/>
</dbReference>
<dbReference type="GO" id="GO:0005634">
    <property type="term" value="C:nucleus"/>
    <property type="evidence" value="ECO:0000314"/>
    <property type="project" value="UniProtKB"/>
</dbReference>
<dbReference type="GO" id="GO:0048471">
    <property type="term" value="C:perinuclear region of cytoplasm"/>
    <property type="evidence" value="ECO:0007669"/>
    <property type="project" value="Ensembl"/>
</dbReference>
<dbReference type="GO" id="GO:0005886">
    <property type="term" value="C:plasma membrane"/>
    <property type="evidence" value="ECO:0000314"/>
    <property type="project" value="AgBase"/>
</dbReference>
<dbReference type="GO" id="GO:0005125">
    <property type="term" value="F:cytokine activity"/>
    <property type="evidence" value="ECO:0000314"/>
    <property type="project" value="UniProt"/>
</dbReference>
<dbReference type="GO" id="GO:0005123">
    <property type="term" value="F:death receptor binding"/>
    <property type="evidence" value="ECO:0007669"/>
    <property type="project" value="Ensembl"/>
</dbReference>
<dbReference type="GO" id="GO:0005102">
    <property type="term" value="F:signaling receptor binding"/>
    <property type="evidence" value="ECO:0000304"/>
    <property type="project" value="ProtInc"/>
</dbReference>
<dbReference type="GO" id="GO:0005164">
    <property type="term" value="F:tumor necrosis factor receptor binding"/>
    <property type="evidence" value="ECO:0007669"/>
    <property type="project" value="Ensembl"/>
</dbReference>
<dbReference type="GO" id="GO:0006915">
    <property type="term" value="P:apoptotic process"/>
    <property type="evidence" value="ECO:0000304"/>
    <property type="project" value="ProtInc"/>
</dbReference>
<dbReference type="GO" id="GO:0097190">
    <property type="term" value="P:apoptotic signaling pathway"/>
    <property type="evidence" value="ECO:0000314"/>
    <property type="project" value="BHF-UCL"/>
</dbReference>
<dbReference type="GO" id="GO:0007267">
    <property type="term" value="P:cell-cell signaling"/>
    <property type="evidence" value="ECO:0000304"/>
    <property type="project" value="ProtInc"/>
</dbReference>
<dbReference type="GO" id="GO:0071346">
    <property type="term" value="P:cellular response to type II interferon"/>
    <property type="evidence" value="ECO:0007669"/>
    <property type="project" value="Ensembl"/>
</dbReference>
<dbReference type="GO" id="GO:0048388">
    <property type="term" value="P:endosomal lumen acidification"/>
    <property type="evidence" value="ECO:0007669"/>
    <property type="project" value="Ensembl"/>
</dbReference>
<dbReference type="GO" id="GO:0097191">
    <property type="term" value="P:extrinsic apoptotic signaling pathway"/>
    <property type="evidence" value="ECO:0000314"/>
    <property type="project" value="UniProtKB"/>
</dbReference>
<dbReference type="GO" id="GO:0008625">
    <property type="term" value="P:extrinsic apoptotic signaling pathway via death domain receptors"/>
    <property type="evidence" value="ECO:0000314"/>
    <property type="project" value="BHF-UCL"/>
</dbReference>
<dbReference type="GO" id="GO:0006925">
    <property type="term" value="P:inflammatory cell apoptotic process"/>
    <property type="evidence" value="ECO:0007669"/>
    <property type="project" value="Ensembl"/>
</dbReference>
<dbReference type="GO" id="GO:0030644">
    <property type="term" value="P:intracellular chloride ion homeostasis"/>
    <property type="evidence" value="ECO:0007669"/>
    <property type="project" value="Ensembl"/>
</dbReference>
<dbReference type="GO" id="GO:0070266">
    <property type="term" value="P:necroptotic process"/>
    <property type="evidence" value="ECO:0000314"/>
    <property type="project" value="BHF-UCL"/>
</dbReference>
<dbReference type="GO" id="GO:0097527">
    <property type="term" value="P:necroptotic signaling pathway"/>
    <property type="evidence" value="ECO:0000314"/>
    <property type="project" value="BHF-UCL"/>
</dbReference>
<dbReference type="GO" id="GO:0016525">
    <property type="term" value="P:negative regulation of angiogenesis"/>
    <property type="evidence" value="ECO:0000314"/>
    <property type="project" value="BHF-UCL"/>
</dbReference>
<dbReference type="GO" id="GO:0000122">
    <property type="term" value="P:negative regulation of transcription by RNA polymerase II"/>
    <property type="evidence" value="ECO:0000314"/>
    <property type="project" value="UniProtKB"/>
</dbReference>
<dbReference type="GO" id="GO:0043065">
    <property type="term" value="P:positive regulation of apoptotic process"/>
    <property type="evidence" value="ECO:0000314"/>
    <property type="project" value="UniProtKB"/>
</dbReference>
<dbReference type="GO" id="GO:0043123">
    <property type="term" value="P:positive regulation of canonical NF-kappaB signal transduction"/>
    <property type="evidence" value="ECO:0000270"/>
    <property type="project" value="UniProtKB"/>
</dbReference>
<dbReference type="GO" id="GO:0008284">
    <property type="term" value="P:positive regulation of cell population proliferation"/>
    <property type="evidence" value="ECO:0007669"/>
    <property type="project" value="Ensembl"/>
</dbReference>
<dbReference type="GO" id="GO:2000353">
    <property type="term" value="P:positive regulation of endothelial cell apoptotic process"/>
    <property type="evidence" value="ECO:0000314"/>
    <property type="project" value="BHF-UCL"/>
</dbReference>
<dbReference type="GO" id="GO:0045742">
    <property type="term" value="P:positive regulation of epidermal growth factor receptor signaling pathway"/>
    <property type="evidence" value="ECO:0007669"/>
    <property type="project" value="Ensembl"/>
</dbReference>
<dbReference type="GO" id="GO:2001238">
    <property type="term" value="P:positive regulation of extrinsic apoptotic signaling pathway"/>
    <property type="evidence" value="ECO:0000318"/>
    <property type="project" value="GO_Central"/>
</dbReference>
<dbReference type="GO" id="GO:0043525">
    <property type="term" value="P:positive regulation of neuron apoptotic process"/>
    <property type="evidence" value="ECO:0007669"/>
    <property type="project" value="Ensembl"/>
</dbReference>
<dbReference type="GO" id="GO:1905782">
    <property type="term" value="P:positive regulation of phosphatidylserine exposure on apoptotic cell surface"/>
    <property type="evidence" value="ECO:0000314"/>
    <property type="project" value="UniProtKB"/>
</dbReference>
<dbReference type="GO" id="GO:1903514">
    <property type="term" value="P:release of sequestered calcium ion into cytosol by endoplasmic reticulum"/>
    <property type="evidence" value="ECO:0000314"/>
    <property type="project" value="MGI"/>
</dbReference>
<dbReference type="GO" id="GO:0070848">
    <property type="term" value="P:response to growth factor"/>
    <property type="evidence" value="ECO:0007669"/>
    <property type="project" value="Ensembl"/>
</dbReference>
<dbReference type="GO" id="GO:0032496">
    <property type="term" value="P:response to lipopolysaccharide"/>
    <property type="evidence" value="ECO:0007669"/>
    <property type="project" value="Ensembl"/>
</dbReference>
<dbReference type="GO" id="GO:0046666">
    <property type="term" value="P:retinal cell programmed cell death"/>
    <property type="evidence" value="ECO:0007669"/>
    <property type="project" value="Ensembl"/>
</dbReference>
<dbReference type="GO" id="GO:0007165">
    <property type="term" value="P:signal transduction"/>
    <property type="evidence" value="ECO:0000304"/>
    <property type="project" value="ProtInc"/>
</dbReference>
<dbReference type="GO" id="GO:0070231">
    <property type="term" value="P:T cell apoptotic process"/>
    <property type="evidence" value="ECO:0000314"/>
    <property type="project" value="UniProtKB"/>
</dbReference>
<dbReference type="CDD" id="cd00184">
    <property type="entry name" value="TNF"/>
    <property type="match status" value="1"/>
</dbReference>
<dbReference type="FunFam" id="2.60.120.40:FF:000017">
    <property type="entry name" value="Tumor necrosis factor ligand superfamily member 6"/>
    <property type="match status" value="1"/>
</dbReference>
<dbReference type="Gene3D" id="2.60.120.40">
    <property type="match status" value="1"/>
</dbReference>
<dbReference type="InterPro" id="IPR028326">
    <property type="entry name" value="FASL"/>
</dbReference>
<dbReference type="InterPro" id="IPR006053">
    <property type="entry name" value="TNF"/>
</dbReference>
<dbReference type="InterPro" id="IPR021184">
    <property type="entry name" value="TNF_CS"/>
</dbReference>
<dbReference type="InterPro" id="IPR006052">
    <property type="entry name" value="TNF_dom"/>
</dbReference>
<dbReference type="InterPro" id="IPR008983">
    <property type="entry name" value="Tumour_necrosis_fac-like_dom"/>
</dbReference>
<dbReference type="PANTHER" id="PTHR11471">
    <property type="entry name" value="TUMOR NECROSIS FACTOR FAMILY MEMBER"/>
    <property type="match status" value="1"/>
</dbReference>
<dbReference type="PANTHER" id="PTHR11471:SF33">
    <property type="entry name" value="TUMOR NECROSIS FACTOR LIGAND SUPERFAMILY MEMBER 6"/>
    <property type="match status" value="1"/>
</dbReference>
<dbReference type="Pfam" id="PF00229">
    <property type="entry name" value="TNF"/>
    <property type="match status" value="1"/>
</dbReference>
<dbReference type="PRINTS" id="PR01681">
    <property type="entry name" value="FASLIGAND"/>
</dbReference>
<dbReference type="PRINTS" id="PR01234">
    <property type="entry name" value="TNECROSISFCT"/>
</dbReference>
<dbReference type="SMART" id="SM00207">
    <property type="entry name" value="TNF"/>
    <property type="match status" value="1"/>
</dbReference>
<dbReference type="SUPFAM" id="SSF49842">
    <property type="entry name" value="TNF-like"/>
    <property type="match status" value="1"/>
</dbReference>
<dbReference type="PROSITE" id="PS00251">
    <property type="entry name" value="THD_1"/>
    <property type="match status" value="1"/>
</dbReference>
<dbReference type="PROSITE" id="PS50049">
    <property type="entry name" value="THD_2"/>
    <property type="match status" value="1"/>
</dbReference>
<feature type="chain" id="PRO_0000034500" description="Tumor necrosis factor ligand superfamily member 6, membrane form">
    <location>
        <begin position="1"/>
        <end position="281"/>
    </location>
</feature>
<feature type="chain" id="PRO_0000417152" description="ADAM10-processed FasL form">
    <location>
        <begin position="1"/>
        <end position="129"/>
    </location>
</feature>
<feature type="chain" id="PRO_0000416842" description="FasL intracellular domain">
    <location>
        <begin position="1"/>
        <end position="81"/>
    </location>
</feature>
<feature type="chain" id="PRO_0000034501" description="Tumor necrosis factor ligand superfamily member 6, soluble form">
    <location>
        <begin position="130"/>
        <end position="281"/>
    </location>
</feature>
<feature type="topological domain" description="Cytoplasmic" evidence="2">
    <location>
        <begin position="1"/>
        <end position="80"/>
    </location>
</feature>
<feature type="transmembrane region" description="Helical; Signal-anchor for type II membrane protein" evidence="2">
    <location>
        <begin position="81"/>
        <end position="102"/>
    </location>
</feature>
<feature type="topological domain" description="Extracellular" evidence="2">
    <location>
        <begin position="103"/>
        <end position="281"/>
    </location>
</feature>
<feature type="domain" description="THD" evidence="3">
    <location>
        <begin position="145"/>
        <end position="281"/>
    </location>
</feature>
<feature type="region of interest" description="Disordered" evidence="4">
    <location>
        <begin position="20"/>
        <end position="71"/>
    </location>
</feature>
<feature type="region of interest" description="Disordered" evidence="4">
    <location>
        <begin position="118"/>
        <end position="142"/>
    </location>
</feature>
<feature type="compositionally biased region" description="Pro residues" evidence="4">
    <location>
        <begin position="43"/>
        <end position="70"/>
    </location>
</feature>
<feature type="compositionally biased region" description="Polar residues" evidence="4">
    <location>
        <begin position="118"/>
        <end position="128"/>
    </location>
</feature>
<feature type="site" description="Cleavage; by SPPL2A" evidence="15">
    <location>
        <begin position="81"/>
        <end position="82"/>
    </location>
</feature>
<feature type="site" description="Cleavage; by ADAM10" evidence="15">
    <location>
        <begin position="129"/>
        <end position="130"/>
    </location>
</feature>
<feature type="glycosylation site" description="N-linked (GlcNAc...) asparagine" evidence="2">
    <location>
        <position position="184"/>
    </location>
</feature>
<feature type="glycosylation site" description="N-linked (GlcNAc...) asparagine" evidence="2">
    <location>
        <position position="250"/>
    </location>
</feature>
<feature type="glycosylation site" description="N-linked (GlcNAc...) asparagine" evidence="2">
    <location>
        <position position="260"/>
    </location>
</feature>
<feature type="disulfide bond" evidence="3 9 16 17">
    <location>
        <begin position="202"/>
        <end position="233"/>
    </location>
</feature>
<feature type="splice variant" id="VSP_006443" description="In isoform 2." evidence="14">
    <original>STSQMHTASSL</original>
    <variation>ATPVHPLKKRS</variation>
    <location>
        <begin position="117"/>
        <end position="127"/>
    </location>
</feature>
<feature type="splice variant" id="VSP_006444" description="In isoform 2." evidence="14">
    <location>
        <begin position="128"/>
        <end position="281"/>
    </location>
</feature>
<feature type="sequence variant" id="VAR_052583" description="In dbSNP:rs12079514.">
    <original>Y</original>
    <variation>S</variation>
    <location>
        <position position="189"/>
    </location>
</feature>
<feature type="sequence variant" id="VAR_075568" description="In ALPS1B; significant reduction in cytotoxicity and apoptosis and inhibition of the shedding of the soluble form; dbSNP:rs2101810634." evidence="8">
    <original>C</original>
    <variation>S</variation>
    <location>
        <position position="202"/>
    </location>
</feature>
<feature type="mutagenesis site" description="Lowers binding to TNFRSF6 and reduces cytotoxicity more than 100-fold." evidence="12">
    <original>P</original>
    <variation>D</variation>
    <variation>F</variation>
    <variation>R</variation>
    <location>
        <position position="206"/>
    </location>
</feature>
<feature type="mutagenesis site" description="Lowers binding to TNFRSF6 and abolishes cytotoxicity." evidence="12">
    <original>Y</original>
    <variation>F</variation>
    <variation>R</variation>
    <location>
        <position position="218"/>
    </location>
</feature>
<feature type="mutagenesis site" description="Abolishes binding to TNRFSF6 and cytotoxicity." evidence="12">
    <original>F</original>
    <variation>L</variation>
    <location>
        <position position="275"/>
    </location>
</feature>
<feature type="helix" evidence="19">
    <location>
        <begin position="137"/>
        <end position="142"/>
    </location>
</feature>
<feature type="strand" evidence="19">
    <location>
        <begin position="146"/>
        <end position="151"/>
    </location>
</feature>
<feature type="strand" evidence="18">
    <location>
        <begin position="157"/>
        <end position="159"/>
    </location>
</feature>
<feature type="strand" evidence="18">
    <location>
        <begin position="165"/>
        <end position="168"/>
    </location>
</feature>
<feature type="strand" evidence="19">
    <location>
        <begin position="170"/>
        <end position="177"/>
    </location>
</feature>
<feature type="strand" evidence="19">
    <location>
        <begin position="180"/>
        <end position="182"/>
    </location>
</feature>
<feature type="strand" evidence="19">
    <location>
        <begin position="187"/>
        <end position="201"/>
    </location>
</feature>
<feature type="strand" evidence="19">
    <location>
        <begin position="207"/>
        <end position="214"/>
    </location>
</feature>
<feature type="strand" evidence="18">
    <location>
        <begin position="218"/>
        <end position="220"/>
    </location>
</feature>
<feature type="strand" evidence="19">
    <location>
        <begin position="222"/>
        <end position="229"/>
    </location>
</feature>
<feature type="strand" evidence="19">
    <location>
        <begin position="239"/>
        <end position="251"/>
    </location>
</feature>
<feature type="strand" evidence="19">
    <location>
        <begin position="256"/>
        <end position="262"/>
    </location>
</feature>
<feature type="helix" evidence="19">
    <location>
        <begin position="264"/>
        <end position="266"/>
    </location>
</feature>
<feature type="turn" evidence="19">
    <location>
        <begin position="271"/>
        <end position="273"/>
    </location>
</feature>
<feature type="strand" evidence="19">
    <location>
        <begin position="274"/>
        <end position="280"/>
    </location>
</feature>
<sequence>MQQPFNYPYPQIYWVDSSASSPWAPPGTVLPCPTSVPRRPGQRRPPPPPPPPPLPPPPPPPPLPPLPLPPLKKRGNHSTGLCLLVMFFMVLVALVGLGLGMFQLFHLQKELAELRESTSQMHTASSLEKQIGHPSPPPEKKELRKVAHLTGKSNSRSMPLEWEDTYGIVLLSGVKYKKGGLVINETGLYFVYSKVYFRGQSCNNLPLSHKVYMRNSKYPQDLVMMEGKMMSYCTTGQMWARSSYLGAVFNLTSADHLYVNVSELSLVNFEESQTFFGLYKL</sequence>